<reference key="1">
    <citation type="journal article" date="2007" name="PLoS ONE">
        <title>A glimpse of streptococcal toxic shock syndrome from comparative genomics of S. suis 2 Chinese isolates.</title>
        <authorList>
            <person name="Chen C."/>
            <person name="Tang J."/>
            <person name="Dong W."/>
            <person name="Wang C."/>
            <person name="Feng Y."/>
            <person name="Wang J."/>
            <person name="Zheng F."/>
            <person name="Pan X."/>
            <person name="Liu D."/>
            <person name="Li M."/>
            <person name="Song Y."/>
            <person name="Zhu X."/>
            <person name="Sun H."/>
            <person name="Feng T."/>
            <person name="Guo Z."/>
            <person name="Ju A."/>
            <person name="Ge J."/>
            <person name="Dong Y."/>
            <person name="Sun W."/>
            <person name="Jiang Y."/>
            <person name="Wang J."/>
            <person name="Yan J."/>
            <person name="Yang H."/>
            <person name="Wang X."/>
            <person name="Gao G.F."/>
            <person name="Yang R."/>
            <person name="Wang J."/>
            <person name="Yu J."/>
        </authorList>
    </citation>
    <scope>NUCLEOTIDE SEQUENCE [LARGE SCALE GENOMIC DNA]</scope>
    <source>
        <strain>05ZYH33</strain>
    </source>
</reference>
<name>SYK_STRSY</name>
<dbReference type="EC" id="6.1.1.6" evidence="1"/>
<dbReference type="EMBL" id="CP000407">
    <property type="protein sequence ID" value="ABP89485.1"/>
    <property type="molecule type" value="Genomic_DNA"/>
</dbReference>
<dbReference type="SMR" id="A4VTP6"/>
<dbReference type="STRING" id="391295.SSU05_0519"/>
<dbReference type="KEGG" id="ssu:SSU05_0519"/>
<dbReference type="eggNOG" id="COG1190">
    <property type="taxonomic scope" value="Bacteria"/>
</dbReference>
<dbReference type="HOGENOM" id="CLU_008255_6_0_9"/>
<dbReference type="GO" id="GO:0005829">
    <property type="term" value="C:cytosol"/>
    <property type="evidence" value="ECO:0007669"/>
    <property type="project" value="TreeGrafter"/>
</dbReference>
<dbReference type="GO" id="GO:0005524">
    <property type="term" value="F:ATP binding"/>
    <property type="evidence" value="ECO:0007669"/>
    <property type="project" value="UniProtKB-UniRule"/>
</dbReference>
<dbReference type="GO" id="GO:0140096">
    <property type="term" value="F:catalytic activity, acting on a protein"/>
    <property type="evidence" value="ECO:0007669"/>
    <property type="project" value="UniProtKB-ARBA"/>
</dbReference>
<dbReference type="GO" id="GO:0004824">
    <property type="term" value="F:lysine-tRNA ligase activity"/>
    <property type="evidence" value="ECO:0007669"/>
    <property type="project" value="UniProtKB-UniRule"/>
</dbReference>
<dbReference type="GO" id="GO:0000287">
    <property type="term" value="F:magnesium ion binding"/>
    <property type="evidence" value="ECO:0007669"/>
    <property type="project" value="UniProtKB-UniRule"/>
</dbReference>
<dbReference type="GO" id="GO:0016740">
    <property type="term" value="F:transferase activity"/>
    <property type="evidence" value="ECO:0007669"/>
    <property type="project" value="UniProtKB-ARBA"/>
</dbReference>
<dbReference type="GO" id="GO:0000049">
    <property type="term" value="F:tRNA binding"/>
    <property type="evidence" value="ECO:0007669"/>
    <property type="project" value="TreeGrafter"/>
</dbReference>
<dbReference type="GO" id="GO:0006430">
    <property type="term" value="P:lysyl-tRNA aminoacylation"/>
    <property type="evidence" value="ECO:0007669"/>
    <property type="project" value="UniProtKB-UniRule"/>
</dbReference>
<dbReference type="CDD" id="cd00775">
    <property type="entry name" value="LysRS_core"/>
    <property type="match status" value="1"/>
</dbReference>
<dbReference type="CDD" id="cd04322">
    <property type="entry name" value="LysRS_N"/>
    <property type="match status" value="1"/>
</dbReference>
<dbReference type="FunFam" id="2.40.50.140:FF:000024">
    <property type="entry name" value="Lysine--tRNA ligase"/>
    <property type="match status" value="1"/>
</dbReference>
<dbReference type="FunFam" id="3.30.930.10:FF:000001">
    <property type="entry name" value="Lysine--tRNA ligase"/>
    <property type="match status" value="1"/>
</dbReference>
<dbReference type="Gene3D" id="3.30.930.10">
    <property type="entry name" value="Bira Bifunctional Protein, Domain 2"/>
    <property type="match status" value="1"/>
</dbReference>
<dbReference type="Gene3D" id="2.40.50.140">
    <property type="entry name" value="Nucleic acid-binding proteins"/>
    <property type="match status" value="1"/>
</dbReference>
<dbReference type="HAMAP" id="MF_00252">
    <property type="entry name" value="Lys_tRNA_synth_class2"/>
    <property type="match status" value="1"/>
</dbReference>
<dbReference type="InterPro" id="IPR004364">
    <property type="entry name" value="Aa-tRNA-synt_II"/>
</dbReference>
<dbReference type="InterPro" id="IPR006195">
    <property type="entry name" value="aa-tRNA-synth_II"/>
</dbReference>
<dbReference type="InterPro" id="IPR045864">
    <property type="entry name" value="aa-tRNA-synth_II/BPL/LPL"/>
</dbReference>
<dbReference type="InterPro" id="IPR002313">
    <property type="entry name" value="Lys-tRNA-ligase_II"/>
</dbReference>
<dbReference type="InterPro" id="IPR034762">
    <property type="entry name" value="Lys-tRNA-ligase_II_bac/euk"/>
</dbReference>
<dbReference type="InterPro" id="IPR044136">
    <property type="entry name" value="Lys-tRNA-ligase_II_N"/>
</dbReference>
<dbReference type="InterPro" id="IPR018149">
    <property type="entry name" value="Lys-tRNA-synth_II_C"/>
</dbReference>
<dbReference type="InterPro" id="IPR012340">
    <property type="entry name" value="NA-bd_OB-fold"/>
</dbReference>
<dbReference type="InterPro" id="IPR004365">
    <property type="entry name" value="NA-bd_OB_tRNA"/>
</dbReference>
<dbReference type="NCBIfam" id="TIGR00499">
    <property type="entry name" value="lysS_bact"/>
    <property type="match status" value="1"/>
</dbReference>
<dbReference type="NCBIfam" id="NF001756">
    <property type="entry name" value="PRK00484.1"/>
    <property type="match status" value="1"/>
</dbReference>
<dbReference type="PANTHER" id="PTHR42918:SF15">
    <property type="entry name" value="LYSINE--TRNA LIGASE, CHLOROPLASTIC_MITOCHONDRIAL"/>
    <property type="match status" value="1"/>
</dbReference>
<dbReference type="PANTHER" id="PTHR42918">
    <property type="entry name" value="LYSYL-TRNA SYNTHETASE"/>
    <property type="match status" value="1"/>
</dbReference>
<dbReference type="Pfam" id="PF00152">
    <property type="entry name" value="tRNA-synt_2"/>
    <property type="match status" value="1"/>
</dbReference>
<dbReference type="Pfam" id="PF01336">
    <property type="entry name" value="tRNA_anti-codon"/>
    <property type="match status" value="1"/>
</dbReference>
<dbReference type="PIRSF" id="PIRSF039101">
    <property type="entry name" value="LysRS2"/>
    <property type="match status" value="1"/>
</dbReference>
<dbReference type="PRINTS" id="PR00982">
    <property type="entry name" value="TRNASYNTHLYS"/>
</dbReference>
<dbReference type="SUPFAM" id="SSF55681">
    <property type="entry name" value="Class II aaRS and biotin synthetases"/>
    <property type="match status" value="1"/>
</dbReference>
<dbReference type="SUPFAM" id="SSF50249">
    <property type="entry name" value="Nucleic acid-binding proteins"/>
    <property type="match status" value="1"/>
</dbReference>
<dbReference type="PROSITE" id="PS50862">
    <property type="entry name" value="AA_TRNA_LIGASE_II"/>
    <property type="match status" value="1"/>
</dbReference>
<feature type="chain" id="PRO_1000012950" description="Lysine--tRNA ligase">
    <location>
        <begin position="1"/>
        <end position="496"/>
    </location>
</feature>
<feature type="binding site" evidence="1">
    <location>
        <position position="409"/>
    </location>
    <ligand>
        <name>Mg(2+)</name>
        <dbReference type="ChEBI" id="CHEBI:18420"/>
        <label>1</label>
    </ligand>
</feature>
<feature type="binding site" evidence="1">
    <location>
        <position position="416"/>
    </location>
    <ligand>
        <name>Mg(2+)</name>
        <dbReference type="ChEBI" id="CHEBI:18420"/>
        <label>1</label>
    </ligand>
</feature>
<feature type="binding site" evidence="1">
    <location>
        <position position="416"/>
    </location>
    <ligand>
        <name>Mg(2+)</name>
        <dbReference type="ChEBI" id="CHEBI:18420"/>
        <label>2</label>
    </ligand>
</feature>
<proteinExistence type="inferred from homology"/>
<protein>
    <recommendedName>
        <fullName evidence="1">Lysine--tRNA ligase</fullName>
        <ecNumber evidence="1">6.1.1.6</ecNumber>
    </recommendedName>
    <alternativeName>
        <fullName evidence="1">Lysyl-tRNA synthetase</fullName>
        <shortName evidence="1">LysRS</shortName>
    </alternativeName>
</protein>
<evidence type="ECO:0000255" key="1">
    <source>
        <dbReference type="HAMAP-Rule" id="MF_00252"/>
    </source>
</evidence>
<comment type="catalytic activity">
    <reaction evidence="1">
        <text>tRNA(Lys) + L-lysine + ATP = L-lysyl-tRNA(Lys) + AMP + diphosphate</text>
        <dbReference type="Rhea" id="RHEA:20792"/>
        <dbReference type="Rhea" id="RHEA-COMP:9696"/>
        <dbReference type="Rhea" id="RHEA-COMP:9697"/>
        <dbReference type="ChEBI" id="CHEBI:30616"/>
        <dbReference type="ChEBI" id="CHEBI:32551"/>
        <dbReference type="ChEBI" id="CHEBI:33019"/>
        <dbReference type="ChEBI" id="CHEBI:78442"/>
        <dbReference type="ChEBI" id="CHEBI:78529"/>
        <dbReference type="ChEBI" id="CHEBI:456215"/>
        <dbReference type="EC" id="6.1.1.6"/>
    </reaction>
</comment>
<comment type="cofactor">
    <cofactor evidence="1">
        <name>Mg(2+)</name>
        <dbReference type="ChEBI" id="CHEBI:18420"/>
    </cofactor>
    <text evidence="1">Binds 3 Mg(2+) ions per subunit.</text>
</comment>
<comment type="subunit">
    <text evidence="1">Homodimer.</text>
</comment>
<comment type="subcellular location">
    <subcellularLocation>
        <location evidence="1">Cytoplasm</location>
    </subcellularLocation>
</comment>
<comment type="similarity">
    <text evidence="1">Belongs to the class-II aminoacyl-tRNA synthetase family.</text>
</comment>
<gene>
    <name evidence="1" type="primary">lysS</name>
    <name type="ordered locus">SSU05_0519</name>
</gene>
<accession>A4VTP6</accession>
<keyword id="KW-0030">Aminoacyl-tRNA synthetase</keyword>
<keyword id="KW-0067">ATP-binding</keyword>
<keyword id="KW-0963">Cytoplasm</keyword>
<keyword id="KW-0436">Ligase</keyword>
<keyword id="KW-0460">Magnesium</keyword>
<keyword id="KW-0479">Metal-binding</keyword>
<keyword id="KW-0547">Nucleotide-binding</keyword>
<keyword id="KW-0648">Protein biosynthesis</keyword>
<sequence length="496" mass="56502">MSTEHFEELNDQQIVRREKMTALAEQGIDPFGKRFERSANSAELKAQYEDKSKEDLEELGQTAIIAGRIMTKRGKGKAGFAHIQDREGQIQIYVRKDDVSEENYEIFKKADLGDFIGVEGDVFKTNVGELSIHARKLTHLSKALRPLPEKFHGLTDIETRYRKRYLDLITNRESFDRFVTRSKIISEIRRYLDGLGFLEVETPVLHNEAGGAAARPFITHHNAQNIDMVLRIATELHLKRLIVGGMERVYEIGRIFRNEGMDATHNPEFTSIEVYQAYADYQDIMDLTEGIIQHTAKAVVGDGPVTYQGTEIAIHEPFKRIHMVDAIKEQTGVDFWQEMSFEEAKALAAEHKVPVEKHHTEVGQIINSFFEEYVEATLIQPTFVYGHPVAVSPLAKKNDEDPRFTDRFELFIMTKEYGNAFTELNDPIDQLERFEAQAKAKELGDDEATGVDYDYIEALEYGMPPTGGLGIGIDRLCMLLTDTTTIRDVLLFPTMK</sequence>
<organism>
    <name type="scientific">Streptococcus suis (strain 05ZYH33)</name>
    <dbReference type="NCBI Taxonomy" id="391295"/>
    <lineage>
        <taxon>Bacteria</taxon>
        <taxon>Bacillati</taxon>
        <taxon>Bacillota</taxon>
        <taxon>Bacilli</taxon>
        <taxon>Lactobacillales</taxon>
        <taxon>Streptococcaceae</taxon>
        <taxon>Streptococcus</taxon>
    </lineage>
</organism>